<comment type="function">
    <text evidence="1">Binds directly to 23S rRNA. Probably involved in E site tRNA release.</text>
</comment>
<comment type="function">
    <text evidence="1">Protein L1 is also a translational repressor protein, it controls the translation of its operon by binding to its mRNA.</text>
</comment>
<comment type="subunit">
    <text evidence="1">Part of the 50S ribosomal subunit.</text>
</comment>
<comment type="similarity">
    <text evidence="1">Belongs to the universal ribosomal protein uL1 family.</text>
</comment>
<organism>
    <name type="scientific">Methanosarcina mazei (strain ATCC BAA-159 / DSM 3647 / Goe1 / Go1 / JCM 11833 / OCM 88)</name>
    <name type="common">Methanosarcina frisia</name>
    <dbReference type="NCBI Taxonomy" id="192952"/>
    <lineage>
        <taxon>Archaea</taxon>
        <taxon>Methanobacteriati</taxon>
        <taxon>Methanobacteriota</taxon>
        <taxon>Stenosarchaea group</taxon>
        <taxon>Methanomicrobia</taxon>
        <taxon>Methanosarcinales</taxon>
        <taxon>Methanosarcinaceae</taxon>
        <taxon>Methanosarcina</taxon>
    </lineage>
</organism>
<proteinExistence type="inferred from homology"/>
<reference key="1">
    <citation type="journal article" date="2002" name="J. Mol. Microbiol. Biotechnol.">
        <title>The genome of Methanosarcina mazei: evidence for lateral gene transfer between Bacteria and Archaea.</title>
        <authorList>
            <person name="Deppenmeier U."/>
            <person name="Johann A."/>
            <person name="Hartsch T."/>
            <person name="Merkl R."/>
            <person name="Schmitz R.A."/>
            <person name="Martinez-Arias R."/>
            <person name="Henne A."/>
            <person name="Wiezer A."/>
            <person name="Baeumer S."/>
            <person name="Jacobi C."/>
            <person name="Brueggemann H."/>
            <person name="Lienard T."/>
            <person name="Christmann A."/>
            <person name="Boemecke M."/>
            <person name="Steckel S."/>
            <person name="Bhattacharyya A."/>
            <person name="Lykidis A."/>
            <person name="Overbeek R."/>
            <person name="Klenk H.-P."/>
            <person name="Gunsalus R.P."/>
            <person name="Fritz H.-J."/>
            <person name="Gottschalk G."/>
        </authorList>
    </citation>
    <scope>NUCLEOTIDE SEQUENCE [LARGE SCALE GENOMIC DNA]</scope>
    <source>
        <strain>ATCC BAA-159 / DSM 3647 / Goe1 / Go1 / JCM 11833 / OCM 88</strain>
    </source>
</reference>
<gene>
    <name evidence="1" type="primary">rpl1</name>
    <name type="ordered locus">MM_1012</name>
</gene>
<protein>
    <recommendedName>
        <fullName evidence="1">Large ribosomal subunit protein uL1</fullName>
    </recommendedName>
    <alternativeName>
        <fullName evidence="2">50S ribosomal protein L1</fullName>
    </alternativeName>
</protein>
<dbReference type="EMBL" id="AE008384">
    <property type="protein sequence ID" value="AAM30708.1"/>
    <property type="molecule type" value="Genomic_DNA"/>
</dbReference>
<dbReference type="RefSeq" id="WP_011032961.1">
    <property type="nucleotide sequence ID" value="NC_003901.1"/>
</dbReference>
<dbReference type="SMR" id="Q8PY52"/>
<dbReference type="KEGG" id="mma:MM_1012"/>
<dbReference type="PATRIC" id="fig|192952.21.peg.1186"/>
<dbReference type="eggNOG" id="arCOG04289">
    <property type="taxonomic scope" value="Archaea"/>
</dbReference>
<dbReference type="HOGENOM" id="CLU_062853_4_0_2"/>
<dbReference type="Proteomes" id="UP000000595">
    <property type="component" value="Chromosome"/>
</dbReference>
<dbReference type="GO" id="GO:0015934">
    <property type="term" value="C:large ribosomal subunit"/>
    <property type="evidence" value="ECO:0007669"/>
    <property type="project" value="InterPro"/>
</dbReference>
<dbReference type="GO" id="GO:0019843">
    <property type="term" value="F:rRNA binding"/>
    <property type="evidence" value="ECO:0007669"/>
    <property type="project" value="UniProtKB-UniRule"/>
</dbReference>
<dbReference type="GO" id="GO:0003735">
    <property type="term" value="F:structural constituent of ribosome"/>
    <property type="evidence" value="ECO:0007669"/>
    <property type="project" value="InterPro"/>
</dbReference>
<dbReference type="GO" id="GO:0000049">
    <property type="term" value="F:tRNA binding"/>
    <property type="evidence" value="ECO:0007669"/>
    <property type="project" value="UniProtKB-KW"/>
</dbReference>
<dbReference type="GO" id="GO:0006417">
    <property type="term" value="P:regulation of translation"/>
    <property type="evidence" value="ECO:0007669"/>
    <property type="project" value="UniProtKB-KW"/>
</dbReference>
<dbReference type="GO" id="GO:0006412">
    <property type="term" value="P:translation"/>
    <property type="evidence" value="ECO:0007669"/>
    <property type="project" value="UniProtKB-UniRule"/>
</dbReference>
<dbReference type="CDD" id="cd00403">
    <property type="entry name" value="Ribosomal_L1"/>
    <property type="match status" value="1"/>
</dbReference>
<dbReference type="FunFam" id="3.40.50.790:FF:000005">
    <property type="entry name" value="50S ribosomal protein L1"/>
    <property type="match status" value="1"/>
</dbReference>
<dbReference type="Gene3D" id="3.30.190.20">
    <property type="match status" value="1"/>
</dbReference>
<dbReference type="Gene3D" id="3.40.50.790">
    <property type="match status" value="1"/>
</dbReference>
<dbReference type="HAMAP" id="MF_01318_A">
    <property type="entry name" value="Ribosomal_uL1_A"/>
    <property type="match status" value="1"/>
</dbReference>
<dbReference type="InterPro" id="IPR002143">
    <property type="entry name" value="Ribosomal_uL1"/>
</dbReference>
<dbReference type="InterPro" id="IPR023674">
    <property type="entry name" value="Ribosomal_uL1-like"/>
</dbReference>
<dbReference type="InterPro" id="IPR028364">
    <property type="entry name" value="Ribosomal_uL1/biogenesis"/>
</dbReference>
<dbReference type="InterPro" id="IPR016095">
    <property type="entry name" value="Ribosomal_uL1_3-a/b-sand"/>
</dbReference>
<dbReference type="InterPro" id="IPR023669">
    <property type="entry name" value="Ribosomal_uL1_arc"/>
</dbReference>
<dbReference type="InterPro" id="IPR023673">
    <property type="entry name" value="Ribosomal_uL1_CS"/>
</dbReference>
<dbReference type="NCBIfam" id="NF003244">
    <property type="entry name" value="PRK04203.1"/>
    <property type="match status" value="1"/>
</dbReference>
<dbReference type="PANTHER" id="PTHR36427">
    <property type="entry name" value="54S RIBOSOMAL PROTEIN L1, MITOCHONDRIAL"/>
    <property type="match status" value="1"/>
</dbReference>
<dbReference type="PANTHER" id="PTHR36427:SF3">
    <property type="entry name" value="LARGE RIBOSOMAL SUBUNIT PROTEIN UL1M"/>
    <property type="match status" value="1"/>
</dbReference>
<dbReference type="Pfam" id="PF00687">
    <property type="entry name" value="Ribosomal_L1"/>
    <property type="match status" value="1"/>
</dbReference>
<dbReference type="PIRSF" id="PIRSF002155">
    <property type="entry name" value="Ribosomal_L1"/>
    <property type="match status" value="1"/>
</dbReference>
<dbReference type="SUPFAM" id="SSF56808">
    <property type="entry name" value="Ribosomal protein L1"/>
    <property type="match status" value="1"/>
</dbReference>
<dbReference type="PROSITE" id="PS01199">
    <property type="entry name" value="RIBOSOMAL_L1"/>
    <property type="match status" value="1"/>
</dbReference>
<accession>Q8PY52</accession>
<sequence>MVERTILEAVKKVIEESPKRNFSESVDLAINLKNLDMNQPKNRVDEEVILPHGLGKELKIGVFAKGDVGLRAKAAGAAYVISDVELEELAADKNKARVLANECDLFIAETQFMPIIGKNLGIVLGPRGKMPIPLMPNKDIGELIQSKQNAVKLRSKDRLTFHVAVGRRNMNPDDLSENIETIMSRLERVLDKGKHNLRSVYVTTTMGKSERVV</sequence>
<keyword id="KW-0678">Repressor</keyword>
<keyword id="KW-0687">Ribonucleoprotein</keyword>
<keyword id="KW-0689">Ribosomal protein</keyword>
<keyword id="KW-0694">RNA-binding</keyword>
<keyword id="KW-0699">rRNA-binding</keyword>
<keyword id="KW-0810">Translation regulation</keyword>
<keyword id="KW-0820">tRNA-binding</keyword>
<evidence type="ECO:0000255" key="1">
    <source>
        <dbReference type="HAMAP-Rule" id="MF_01318"/>
    </source>
</evidence>
<evidence type="ECO:0000305" key="2"/>
<name>RL1_METMA</name>
<feature type="chain" id="PRO_0000125800" description="Large ribosomal subunit protein uL1">
    <location>
        <begin position="1"/>
        <end position="213"/>
    </location>
</feature>